<keyword id="KW-0963">Cytoplasm</keyword>
<keyword id="KW-0489">Methyltransferase</keyword>
<keyword id="KW-0698">rRNA processing</keyword>
<keyword id="KW-0949">S-adenosyl-L-methionine</keyword>
<keyword id="KW-0808">Transferase</keyword>
<accession>Q5PJN8</accession>
<dbReference type="EC" id="2.1.1.242" evidence="1"/>
<dbReference type="EMBL" id="CP000026">
    <property type="protein sequence ID" value="AAV79261.1"/>
    <property type="molecule type" value="Genomic_DNA"/>
</dbReference>
<dbReference type="RefSeq" id="WP_001165127.1">
    <property type="nucleotide sequence ID" value="NC_006511.1"/>
</dbReference>
<dbReference type="SMR" id="Q5PJN8"/>
<dbReference type="KEGG" id="spt:SPA3450"/>
<dbReference type="HOGENOM" id="CLU_076324_0_0_6"/>
<dbReference type="Proteomes" id="UP000008185">
    <property type="component" value="Chromosome"/>
</dbReference>
<dbReference type="GO" id="GO:0005737">
    <property type="term" value="C:cytoplasm"/>
    <property type="evidence" value="ECO:0007669"/>
    <property type="project" value="UniProtKB-SubCell"/>
</dbReference>
<dbReference type="GO" id="GO:0008990">
    <property type="term" value="F:rRNA (guanine-N2-)-methyltransferase activity"/>
    <property type="evidence" value="ECO:0007669"/>
    <property type="project" value="UniProtKB-UniRule"/>
</dbReference>
<dbReference type="CDD" id="cd02440">
    <property type="entry name" value="AdoMet_MTases"/>
    <property type="match status" value="1"/>
</dbReference>
<dbReference type="FunFam" id="3.40.1630.10:FF:000001">
    <property type="entry name" value="Ribosomal RNA small subunit methyltransferase J"/>
    <property type="match status" value="1"/>
</dbReference>
<dbReference type="FunFam" id="3.40.50.150:FF:000072">
    <property type="entry name" value="Ribosomal RNA small subunit methyltransferase J"/>
    <property type="match status" value="1"/>
</dbReference>
<dbReference type="Gene3D" id="3.40.50.150">
    <property type="entry name" value="Vaccinia Virus protein VP39"/>
    <property type="match status" value="1"/>
</dbReference>
<dbReference type="Gene3D" id="3.40.1630.10">
    <property type="entry name" value="YhiQ-like domain"/>
    <property type="match status" value="1"/>
</dbReference>
<dbReference type="HAMAP" id="MF_01523">
    <property type="entry name" value="16SrRNA_methyltr_J"/>
    <property type="match status" value="1"/>
</dbReference>
<dbReference type="InterPro" id="IPR007536">
    <property type="entry name" value="16SrRNA_methylTrfase_J"/>
</dbReference>
<dbReference type="InterPro" id="IPR029063">
    <property type="entry name" value="SAM-dependent_MTases_sf"/>
</dbReference>
<dbReference type="NCBIfam" id="NF008012">
    <property type="entry name" value="PRK10742.1"/>
    <property type="match status" value="1"/>
</dbReference>
<dbReference type="PANTHER" id="PTHR36112">
    <property type="entry name" value="RIBOSOMAL RNA SMALL SUBUNIT METHYLTRANSFERASE J"/>
    <property type="match status" value="1"/>
</dbReference>
<dbReference type="PANTHER" id="PTHR36112:SF1">
    <property type="entry name" value="RIBOSOMAL RNA SMALL SUBUNIT METHYLTRANSFERASE J"/>
    <property type="match status" value="1"/>
</dbReference>
<dbReference type="Pfam" id="PF04445">
    <property type="entry name" value="SAM_MT"/>
    <property type="match status" value="1"/>
</dbReference>
<dbReference type="SUPFAM" id="SSF53335">
    <property type="entry name" value="S-adenosyl-L-methionine-dependent methyltransferases"/>
    <property type="match status" value="1"/>
</dbReference>
<evidence type="ECO:0000255" key="1">
    <source>
        <dbReference type="HAMAP-Rule" id="MF_01523"/>
    </source>
</evidence>
<comment type="function">
    <text evidence="1">Specifically methylates the guanosine in position 1516 of 16S rRNA.</text>
</comment>
<comment type="catalytic activity">
    <reaction evidence="1">
        <text>guanosine(1516) in 16S rRNA + S-adenosyl-L-methionine = N(2)-methylguanosine(1516) in 16S rRNA + S-adenosyl-L-homocysteine + H(+)</text>
        <dbReference type="Rhea" id="RHEA:43220"/>
        <dbReference type="Rhea" id="RHEA-COMP:10412"/>
        <dbReference type="Rhea" id="RHEA-COMP:10413"/>
        <dbReference type="ChEBI" id="CHEBI:15378"/>
        <dbReference type="ChEBI" id="CHEBI:57856"/>
        <dbReference type="ChEBI" id="CHEBI:59789"/>
        <dbReference type="ChEBI" id="CHEBI:74269"/>
        <dbReference type="ChEBI" id="CHEBI:74481"/>
        <dbReference type="EC" id="2.1.1.242"/>
    </reaction>
</comment>
<comment type="subcellular location">
    <subcellularLocation>
        <location evidence="1">Cytoplasm</location>
    </subcellularLocation>
</comment>
<comment type="similarity">
    <text evidence="1">Belongs to the methyltransferase superfamily. RsmJ family.</text>
</comment>
<organism>
    <name type="scientific">Salmonella paratyphi A (strain ATCC 9150 / SARB42)</name>
    <dbReference type="NCBI Taxonomy" id="295319"/>
    <lineage>
        <taxon>Bacteria</taxon>
        <taxon>Pseudomonadati</taxon>
        <taxon>Pseudomonadota</taxon>
        <taxon>Gammaproteobacteria</taxon>
        <taxon>Enterobacterales</taxon>
        <taxon>Enterobacteriaceae</taxon>
        <taxon>Salmonella</taxon>
    </lineage>
</organism>
<gene>
    <name evidence="1" type="primary">rsmJ</name>
    <name type="synonym">yhiQ</name>
    <name type="ordered locus">SPA3450</name>
</gene>
<feature type="chain" id="PRO_0000212089" description="Ribosomal RNA small subunit methyltransferase J">
    <location>
        <begin position="1"/>
        <end position="252"/>
    </location>
</feature>
<feature type="binding site" evidence="1">
    <location>
        <begin position="101"/>
        <end position="102"/>
    </location>
    <ligand>
        <name>S-adenosyl-L-methionine</name>
        <dbReference type="ChEBI" id="CHEBI:59789"/>
    </ligand>
</feature>
<feature type="binding site" evidence="1">
    <location>
        <begin position="117"/>
        <end position="118"/>
    </location>
    <ligand>
        <name>S-adenosyl-L-methionine</name>
        <dbReference type="ChEBI" id="CHEBI:59789"/>
    </ligand>
</feature>
<feature type="binding site" evidence="1">
    <location>
        <begin position="153"/>
        <end position="154"/>
    </location>
    <ligand>
        <name>S-adenosyl-L-methionine</name>
        <dbReference type="ChEBI" id="CHEBI:59789"/>
    </ligand>
</feature>
<feature type="binding site" evidence="1">
    <location>
        <position position="171"/>
    </location>
    <ligand>
        <name>S-adenosyl-L-methionine</name>
        <dbReference type="ChEBI" id="CHEBI:59789"/>
    </ligand>
</feature>
<name>RSMJ_SALPA</name>
<reference key="1">
    <citation type="journal article" date="2004" name="Nat. Genet.">
        <title>Comparison of genome degradation in Paratyphi A and Typhi, human-restricted serovars of Salmonella enterica that cause typhoid.</title>
        <authorList>
            <person name="McClelland M."/>
            <person name="Sanderson K.E."/>
            <person name="Clifton S.W."/>
            <person name="Latreille P."/>
            <person name="Porwollik S."/>
            <person name="Sabo A."/>
            <person name="Meyer R."/>
            <person name="Bieri T."/>
            <person name="Ozersky P."/>
            <person name="McLellan M."/>
            <person name="Harkins C.R."/>
            <person name="Wang C."/>
            <person name="Nguyen C."/>
            <person name="Berghoff A."/>
            <person name="Elliott G."/>
            <person name="Kohlberg S."/>
            <person name="Strong C."/>
            <person name="Du F."/>
            <person name="Carter J."/>
            <person name="Kremizki C."/>
            <person name="Layman D."/>
            <person name="Leonard S."/>
            <person name="Sun H."/>
            <person name="Fulton L."/>
            <person name="Nash W."/>
            <person name="Miner T."/>
            <person name="Minx P."/>
            <person name="Delehaunty K."/>
            <person name="Fronick C."/>
            <person name="Magrini V."/>
            <person name="Nhan M."/>
            <person name="Warren W."/>
            <person name="Florea L."/>
            <person name="Spieth J."/>
            <person name="Wilson R.K."/>
        </authorList>
    </citation>
    <scope>NUCLEOTIDE SEQUENCE [LARGE SCALE GENOMIC DNA]</scope>
    <source>
        <strain>ATCC 9150 / SARB42</strain>
    </source>
</reference>
<sequence>MQICLMDETGATDGALSVLAARWGLEHDEDNPMALVLTPQHLELRKRDEPKLGGIFVDFVGGAMAHRRKFGGGRGEAVAKAVGIKGDYLPDVVDATAGLGRDAFVLASVGCRVRMLERNPVVAALLDDGLTRGYADADIGGWLQERLQLIHASSLTALTDITPRPQVVYLDPMFPHRQKSALVKKEMRVFQSLVGPDLDADGLLEPARQLATKRVVVKRPDYAPPLADVATPNAIVTKGHRFDIYAGTPLTE</sequence>
<proteinExistence type="inferred from homology"/>
<protein>
    <recommendedName>
        <fullName evidence="1">Ribosomal RNA small subunit methyltransferase J</fullName>
        <ecNumber evidence="1">2.1.1.242</ecNumber>
    </recommendedName>
    <alternativeName>
        <fullName evidence="1">16S rRNA m2G1516 methyltransferase</fullName>
    </alternativeName>
    <alternativeName>
        <fullName evidence="1">rRNA (guanine-N(2)-)-methyltransferase</fullName>
    </alternativeName>
</protein>